<sequence length="260" mass="29183">MENEVNAGTASSSRWNPTKDQITLLENLYKEGIRTPSADQIQQITGRLRAYGHIEGKNVFYWFQNHKARQRQKQKQERMAYFNRLLHKTSRFFYPPPCSNVGCVSPYYLQQASDHHMNQHGSVYTNDLLHRNNVMIPSGGYEKRTVTQHQKQLSDIRTTAATRMPISPSSLRFDRFALRDNCYAGEDINVNSSGRKTLPLFPLQPLNASNADGMGSSSFALGSDSPVDCSSDGAGREQPFIDFFSGGSTSTRFDSNGNGL</sequence>
<comment type="function">
    <text evidence="2">Probable transcription factor involved in embryonic patterning. Required for apical embryo development after fertilization. Its specific localization to the apical daughter cell of the zygote, while WOX8 is confined to the basal cell, suggests that the asymmetric division of the plant zygote separates determinants of apical and basal cell fates.</text>
</comment>
<comment type="subcellular location">
    <subcellularLocation>
        <location evidence="1">Nucleus</location>
    </subcellularLocation>
</comment>
<comment type="developmental stage">
    <text evidence="2">Detected in the egg cell and the central cell of the embryo sac, but not in the synergids, the antipodals or the male gametophyte. After fertilization, it is expressed in the zygote. After the first division of the zygote, it is detected exclusively in the apical daughter cell, while WOX8 is expressed in the basal daughter cell. Subsequently, it is expressed in all cells of the 4-cell embryo proper and predominantly in the apical domain of the 8-cell embryo. However, in some 8-cell embryos it is also weakly expressed in the central domain suggesting that expression shifts to the most apical cells during this stage. Expression remains restricted to the apical domain in the 16-cell embryo and the early-globular stage. Not expressed in the apical domain thereafter. However, in heart stage embryos it is weakly expressed in a ring of epidermal cells approximately at the junction of hypocotyl and root. Not expressed in mature embryos, endosperm or postembryonically in inflorescences.</text>
</comment>
<comment type="similarity">
    <text evidence="3">Belongs to the WUS homeobox family.</text>
</comment>
<comment type="sequence caution" evidence="3">
    <conflict type="erroneous gene model prediction">
        <sequence resource="EMBL-CDS" id="BAB09778"/>
    </conflict>
</comment>
<feature type="chain" id="PRO_0000049366" description="WUSCHEL-related homeobox 2">
    <location>
        <begin position="1"/>
        <end position="260"/>
    </location>
</feature>
<feature type="DNA-binding region" description="Homeobox; WUS-type" evidence="1">
    <location>
        <begin position="10"/>
        <end position="74"/>
    </location>
</feature>
<feature type="sequence conflict" description="In Ref. 1; AAP37131." evidence="3" ref="1">
    <original>N</original>
    <variation>H</variation>
    <location>
        <position position="181"/>
    </location>
</feature>
<evidence type="ECO:0000255" key="1">
    <source>
        <dbReference type="PROSITE-ProRule" id="PRU00108"/>
    </source>
</evidence>
<evidence type="ECO:0000269" key="2">
    <source>
    </source>
</evidence>
<evidence type="ECO:0000305" key="3"/>
<gene>
    <name type="primary">WOX2</name>
    <name type="ordered locus">At5g59340</name>
    <name type="ORF">MNC17.25</name>
</gene>
<dbReference type="EMBL" id="AY251392">
    <property type="protein sequence ID" value="AAP37131.1"/>
    <property type="molecule type" value="mRNA"/>
</dbReference>
<dbReference type="EMBL" id="AY251393">
    <property type="protein sequence ID" value="AAP37132.1"/>
    <property type="molecule type" value="mRNA"/>
</dbReference>
<dbReference type="EMBL" id="AB016890">
    <property type="protein sequence ID" value="BAB09778.1"/>
    <property type="status" value="ALT_SEQ"/>
    <property type="molecule type" value="Genomic_DNA"/>
</dbReference>
<dbReference type="EMBL" id="CP002688">
    <property type="protein sequence ID" value="AED97173.1"/>
    <property type="molecule type" value="Genomic_DNA"/>
</dbReference>
<dbReference type="RefSeq" id="NP_200742.2">
    <property type="nucleotide sequence ID" value="NM_125325.3"/>
</dbReference>
<dbReference type="SMR" id="Q6X7K1"/>
<dbReference type="BioGRID" id="21297">
    <property type="interactions" value="1"/>
</dbReference>
<dbReference type="FunCoup" id="Q6X7K1">
    <property type="interactions" value="182"/>
</dbReference>
<dbReference type="STRING" id="3702.Q6X7K1"/>
<dbReference type="PaxDb" id="3702-AT5G59340.1"/>
<dbReference type="ProteomicsDB" id="242641"/>
<dbReference type="EnsemblPlants" id="AT5G59340.1">
    <property type="protein sequence ID" value="AT5G59340.1"/>
    <property type="gene ID" value="AT5G59340"/>
</dbReference>
<dbReference type="GeneID" id="836053"/>
<dbReference type="Gramene" id="AT5G59340.1">
    <property type="protein sequence ID" value="AT5G59340.1"/>
    <property type="gene ID" value="AT5G59340"/>
</dbReference>
<dbReference type="KEGG" id="ath:AT5G59340"/>
<dbReference type="Araport" id="AT5G59340"/>
<dbReference type="TAIR" id="AT5G59340">
    <property type="gene designation" value="WOX2"/>
</dbReference>
<dbReference type="eggNOG" id="ENOG502RZ2B">
    <property type="taxonomic scope" value="Eukaryota"/>
</dbReference>
<dbReference type="HOGENOM" id="CLU_070454_0_0_1"/>
<dbReference type="InParanoid" id="Q6X7K1"/>
<dbReference type="OMA" id="HRNNVMI"/>
<dbReference type="PhylomeDB" id="Q6X7K1"/>
<dbReference type="PRO" id="PR:Q6X7K1"/>
<dbReference type="Proteomes" id="UP000006548">
    <property type="component" value="Chromosome 5"/>
</dbReference>
<dbReference type="ExpressionAtlas" id="Q6X7K1">
    <property type="expression patterns" value="baseline and differential"/>
</dbReference>
<dbReference type="GO" id="GO:0005634">
    <property type="term" value="C:nucleus"/>
    <property type="evidence" value="ECO:0007669"/>
    <property type="project" value="UniProtKB-SubCell"/>
</dbReference>
<dbReference type="GO" id="GO:0003677">
    <property type="term" value="F:DNA binding"/>
    <property type="evidence" value="ECO:0007669"/>
    <property type="project" value="UniProtKB-KW"/>
</dbReference>
<dbReference type="GO" id="GO:0003700">
    <property type="term" value="F:DNA-binding transcription factor activity"/>
    <property type="evidence" value="ECO:0000250"/>
    <property type="project" value="TAIR"/>
</dbReference>
<dbReference type="GO" id="GO:0010654">
    <property type="term" value="P:apical cell fate commitment"/>
    <property type="evidence" value="ECO:0000315"/>
    <property type="project" value="TAIR"/>
</dbReference>
<dbReference type="GO" id="GO:0090451">
    <property type="term" value="P:cotyledon boundary formation"/>
    <property type="evidence" value="ECO:0000316"/>
    <property type="project" value="TAIR"/>
</dbReference>
<dbReference type="GO" id="GO:0048825">
    <property type="term" value="P:cotyledon development"/>
    <property type="evidence" value="ECO:0000315"/>
    <property type="project" value="TAIR"/>
</dbReference>
<dbReference type="GO" id="GO:0009880">
    <property type="term" value="P:embryonic pattern specification"/>
    <property type="evidence" value="ECO:0000315"/>
    <property type="project" value="TAIR"/>
</dbReference>
<dbReference type="GO" id="GO:0009942">
    <property type="term" value="P:longitudinal axis specification"/>
    <property type="evidence" value="ECO:0000315"/>
    <property type="project" value="TAIR"/>
</dbReference>
<dbReference type="GO" id="GO:0008284">
    <property type="term" value="P:positive regulation of cell population proliferation"/>
    <property type="evidence" value="ECO:0000316"/>
    <property type="project" value="TAIR"/>
</dbReference>
<dbReference type="CDD" id="cd00086">
    <property type="entry name" value="homeodomain"/>
    <property type="match status" value="1"/>
</dbReference>
<dbReference type="FunFam" id="1.10.10.60:FF:000146">
    <property type="entry name" value="WUSCHEL-related homeobox 4"/>
    <property type="match status" value="1"/>
</dbReference>
<dbReference type="Gene3D" id="1.10.10.60">
    <property type="entry name" value="Homeodomain-like"/>
    <property type="match status" value="1"/>
</dbReference>
<dbReference type="InterPro" id="IPR001356">
    <property type="entry name" value="HD"/>
</dbReference>
<dbReference type="InterPro" id="IPR009057">
    <property type="entry name" value="Homeodomain-like_sf"/>
</dbReference>
<dbReference type="InterPro" id="IPR044555">
    <property type="entry name" value="WUSCHEL-like"/>
</dbReference>
<dbReference type="PANTHER" id="PTHR45940">
    <property type="entry name" value="WUSCHEL-RELATED HOMEOBOX 1-RELATED"/>
    <property type="match status" value="1"/>
</dbReference>
<dbReference type="PANTHER" id="PTHR45940:SF6">
    <property type="entry name" value="WUSCHEL-RELATED HOMEOBOX 2"/>
    <property type="match status" value="1"/>
</dbReference>
<dbReference type="Pfam" id="PF00046">
    <property type="entry name" value="Homeodomain"/>
    <property type="match status" value="1"/>
</dbReference>
<dbReference type="SMART" id="SM00389">
    <property type="entry name" value="HOX"/>
    <property type="match status" value="1"/>
</dbReference>
<dbReference type="SUPFAM" id="SSF46689">
    <property type="entry name" value="Homeodomain-like"/>
    <property type="match status" value="1"/>
</dbReference>
<dbReference type="PROSITE" id="PS50071">
    <property type="entry name" value="HOMEOBOX_2"/>
    <property type="match status" value="1"/>
</dbReference>
<keyword id="KW-0217">Developmental protein</keyword>
<keyword id="KW-0238">DNA-binding</keyword>
<keyword id="KW-0371">Homeobox</keyword>
<keyword id="KW-0539">Nucleus</keyword>
<keyword id="KW-1185">Reference proteome</keyword>
<keyword id="KW-0804">Transcription</keyword>
<keyword id="KW-0805">Transcription regulation</keyword>
<organism>
    <name type="scientific">Arabidopsis thaliana</name>
    <name type="common">Mouse-ear cress</name>
    <dbReference type="NCBI Taxonomy" id="3702"/>
    <lineage>
        <taxon>Eukaryota</taxon>
        <taxon>Viridiplantae</taxon>
        <taxon>Streptophyta</taxon>
        <taxon>Embryophyta</taxon>
        <taxon>Tracheophyta</taxon>
        <taxon>Spermatophyta</taxon>
        <taxon>Magnoliopsida</taxon>
        <taxon>eudicotyledons</taxon>
        <taxon>Gunneridae</taxon>
        <taxon>Pentapetalae</taxon>
        <taxon>rosids</taxon>
        <taxon>malvids</taxon>
        <taxon>Brassicales</taxon>
        <taxon>Brassicaceae</taxon>
        <taxon>Camelineae</taxon>
        <taxon>Arabidopsis</taxon>
    </lineage>
</organism>
<reference key="1">
    <citation type="journal article" date="2004" name="Development">
        <title>Expression dynamics of WOX genes mark cell fate decisions during early embryonic patterning in Arabidopsis thaliana.</title>
        <authorList>
            <person name="Haecker A."/>
            <person name="Gross-Hardt R."/>
            <person name="Geiges B."/>
            <person name="Sarkar A."/>
            <person name="Breuninger H."/>
            <person name="Herrmann M."/>
            <person name="Laux T."/>
        </authorList>
    </citation>
    <scope>NUCLEOTIDE SEQUENCE [MRNA]</scope>
    <scope>FUNCTION</scope>
    <scope>DEVELOPMENTAL STAGE</scope>
    <source>
        <strain>cv. Landsberg erecta</strain>
    </source>
</reference>
<reference key="2">
    <citation type="journal article" date="1998" name="DNA Res.">
        <title>Structural analysis of Arabidopsis thaliana chromosome 5. VIII. Sequence features of the regions of 1,081,958 bp covered by seventeen physically assigned P1 and TAC clones.</title>
        <authorList>
            <person name="Asamizu E."/>
            <person name="Sato S."/>
            <person name="Kaneko T."/>
            <person name="Nakamura Y."/>
            <person name="Kotani H."/>
            <person name="Miyajima N."/>
            <person name="Tabata S."/>
        </authorList>
    </citation>
    <scope>NUCLEOTIDE SEQUENCE [LARGE SCALE GENOMIC DNA]</scope>
    <source>
        <strain>cv. Columbia</strain>
    </source>
</reference>
<reference key="3">
    <citation type="journal article" date="2017" name="Plant J.">
        <title>Araport11: a complete reannotation of the Arabidopsis thaliana reference genome.</title>
        <authorList>
            <person name="Cheng C.Y."/>
            <person name="Krishnakumar V."/>
            <person name="Chan A.P."/>
            <person name="Thibaud-Nissen F."/>
            <person name="Schobel S."/>
            <person name="Town C.D."/>
        </authorList>
    </citation>
    <scope>GENOME REANNOTATION</scope>
    <source>
        <strain>cv. Columbia</strain>
    </source>
</reference>
<accession>Q6X7K1</accession>
<accession>Q6X7K2</accession>
<accession>Q9FIE5</accession>
<name>WOX2_ARATH</name>
<protein>
    <recommendedName>
        <fullName>WUSCHEL-related homeobox 2</fullName>
    </recommendedName>
</protein>
<proteinExistence type="evidence at transcript level"/>